<organism>
    <name type="scientific">Micrococcus luteus (strain ATCC 4698 / DSM 20030 / JCM 1464 / CCM 169 / CCUG 5858 / IAM 1056 / NBRC 3333 / NCIMB 9278 / NCTC 2665 / VKM Ac-2230)</name>
    <name type="common">Micrococcus lysodeikticus</name>
    <dbReference type="NCBI Taxonomy" id="465515"/>
    <lineage>
        <taxon>Bacteria</taxon>
        <taxon>Bacillati</taxon>
        <taxon>Actinomycetota</taxon>
        <taxon>Actinomycetes</taxon>
        <taxon>Micrococcales</taxon>
        <taxon>Micrococcaceae</taxon>
        <taxon>Micrococcus</taxon>
    </lineage>
</organism>
<protein>
    <recommendedName>
        <fullName evidence="1">Small ribosomal subunit protein bS16</fullName>
    </recommendedName>
    <alternativeName>
        <fullName evidence="3">30S ribosomal protein S16</fullName>
    </alternativeName>
</protein>
<name>RS16_MICLC</name>
<dbReference type="EMBL" id="CP001628">
    <property type="protein sequence ID" value="ACS30436.1"/>
    <property type="molecule type" value="Genomic_DNA"/>
</dbReference>
<dbReference type="RefSeq" id="WP_010078920.1">
    <property type="nucleotide sequence ID" value="NC_012803.1"/>
</dbReference>
<dbReference type="SMR" id="C5CAG7"/>
<dbReference type="STRING" id="465515.Mlut_09150"/>
<dbReference type="EnsemblBacteria" id="ACS30436">
    <property type="protein sequence ID" value="ACS30436"/>
    <property type="gene ID" value="Mlut_09150"/>
</dbReference>
<dbReference type="GeneID" id="93345077"/>
<dbReference type="KEGG" id="mlu:Mlut_09150"/>
<dbReference type="PATRIC" id="fig|465515.4.peg.876"/>
<dbReference type="eggNOG" id="COG0228">
    <property type="taxonomic scope" value="Bacteria"/>
</dbReference>
<dbReference type="HOGENOM" id="CLU_100590_1_0_11"/>
<dbReference type="Proteomes" id="UP000000738">
    <property type="component" value="Chromosome"/>
</dbReference>
<dbReference type="GO" id="GO:0005737">
    <property type="term" value="C:cytoplasm"/>
    <property type="evidence" value="ECO:0007669"/>
    <property type="project" value="UniProtKB-ARBA"/>
</dbReference>
<dbReference type="GO" id="GO:0015935">
    <property type="term" value="C:small ribosomal subunit"/>
    <property type="evidence" value="ECO:0007669"/>
    <property type="project" value="TreeGrafter"/>
</dbReference>
<dbReference type="GO" id="GO:0003735">
    <property type="term" value="F:structural constituent of ribosome"/>
    <property type="evidence" value="ECO:0007669"/>
    <property type="project" value="InterPro"/>
</dbReference>
<dbReference type="GO" id="GO:0006412">
    <property type="term" value="P:translation"/>
    <property type="evidence" value="ECO:0007669"/>
    <property type="project" value="UniProtKB-UniRule"/>
</dbReference>
<dbReference type="Gene3D" id="3.30.1320.10">
    <property type="match status" value="1"/>
</dbReference>
<dbReference type="HAMAP" id="MF_00385">
    <property type="entry name" value="Ribosomal_bS16"/>
    <property type="match status" value="1"/>
</dbReference>
<dbReference type="InterPro" id="IPR000307">
    <property type="entry name" value="Ribosomal_bS16"/>
</dbReference>
<dbReference type="InterPro" id="IPR020592">
    <property type="entry name" value="Ribosomal_bS16_CS"/>
</dbReference>
<dbReference type="InterPro" id="IPR023803">
    <property type="entry name" value="Ribosomal_bS16_dom_sf"/>
</dbReference>
<dbReference type="NCBIfam" id="NF011093">
    <property type="entry name" value="PRK14520.1"/>
    <property type="match status" value="1"/>
</dbReference>
<dbReference type="NCBIfam" id="TIGR00002">
    <property type="entry name" value="S16"/>
    <property type="match status" value="1"/>
</dbReference>
<dbReference type="PANTHER" id="PTHR12919">
    <property type="entry name" value="30S RIBOSOMAL PROTEIN S16"/>
    <property type="match status" value="1"/>
</dbReference>
<dbReference type="PANTHER" id="PTHR12919:SF20">
    <property type="entry name" value="SMALL RIBOSOMAL SUBUNIT PROTEIN BS16M"/>
    <property type="match status" value="1"/>
</dbReference>
<dbReference type="Pfam" id="PF00886">
    <property type="entry name" value="Ribosomal_S16"/>
    <property type="match status" value="1"/>
</dbReference>
<dbReference type="SUPFAM" id="SSF54565">
    <property type="entry name" value="Ribosomal protein S16"/>
    <property type="match status" value="1"/>
</dbReference>
<dbReference type="PROSITE" id="PS00732">
    <property type="entry name" value="RIBOSOMAL_S16"/>
    <property type="match status" value="1"/>
</dbReference>
<proteinExistence type="inferred from homology"/>
<evidence type="ECO:0000255" key="1">
    <source>
        <dbReference type="HAMAP-Rule" id="MF_00385"/>
    </source>
</evidence>
<evidence type="ECO:0000256" key="2">
    <source>
        <dbReference type="SAM" id="MobiDB-lite"/>
    </source>
</evidence>
<evidence type="ECO:0000305" key="3"/>
<accession>C5CAG7</accession>
<sequence length="156" mass="17271">MAVKIRLKRFGKIRAPFYRVVVMDSRTRRDGRAIEEIGKYHPTEEPSFIEIDSERAQYWLSVGAQPTEQVAALLKITGDWQKFKGESGAEGTLKSKSEKEAFVAPERDSVILPEEPKQEEAPAESEQPAEAPAEEAAEAPAEEAAEAPAEDAEKSE</sequence>
<reference key="1">
    <citation type="journal article" date="2010" name="J. Bacteriol.">
        <title>Genome sequence of the Fleming strain of Micrococcus luteus, a simple free-living actinobacterium.</title>
        <authorList>
            <person name="Young M."/>
            <person name="Artsatbanov V."/>
            <person name="Beller H.R."/>
            <person name="Chandra G."/>
            <person name="Chater K.F."/>
            <person name="Dover L.G."/>
            <person name="Goh E.B."/>
            <person name="Kahan T."/>
            <person name="Kaprelyants A.S."/>
            <person name="Kyrpides N."/>
            <person name="Lapidus A."/>
            <person name="Lowry S.R."/>
            <person name="Lykidis A."/>
            <person name="Mahillon J."/>
            <person name="Markowitz V."/>
            <person name="Mavromatis K."/>
            <person name="Mukamolova G.V."/>
            <person name="Oren A."/>
            <person name="Rokem J.S."/>
            <person name="Smith M.C."/>
            <person name="Young D.I."/>
            <person name="Greenblatt C.L."/>
        </authorList>
    </citation>
    <scope>NUCLEOTIDE SEQUENCE [LARGE SCALE GENOMIC DNA]</scope>
    <source>
        <strain>ATCC 4698 / DSM 20030 / JCM 1464 / CCM 169 / CCUG 5858 / IAM 1056 / NBRC 3333 / NCIMB 9278 / NCTC 2665 / VKM Ac-2230</strain>
    </source>
</reference>
<keyword id="KW-1185">Reference proteome</keyword>
<keyword id="KW-0687">Ribonucleoprotein</keyword>
<keyword id="KW-0689">Ribosomal protein</keyword>
<comment type="similarity">
    <text evidence="1">Belongs to the bacterial ribosomal protein bS16 family.</text>
</comment>
<feature type="chain" id="PRO_1000205767" description="Small ribosomal subunit protein bS16">
    <location>
        <begin position="1"/>
        <end position="156"/>
    </location>
</feature>
<feature type="region of interest" description="Disordered" evidence="2">
    <location>
        <begin position="85"/>
        <end position="156"/>
    </location>
</feature>
<feature type="compositionally biased region" description="Basic and acidic residues" evidence="2">
    <location>
        <begin position="85"/>
        <end position="120"/>
    </location>
</feature>
<feature type="compositionally biased region" description="Acidic residues" evidence="2">
    <location>
        <begin position="132"/>
        <end position="150"/>
    </location>
</feature>
<gene>
    <name evidence="1" type="primary">rpsP</name>
    <name type="ordered locus">Mlut_09150</name>
</gene>